<proteinExistence type="inferred from homology"/>
<reference key="1">
    <citation type="journal article" date="2010" name="J. Bacteriol.">
        <title>The genetic basis of laboratory adaptation in Caulobacter crescentus.</title>
        <authorList>
            <person name="Marks M.E."/>
            <person name="Castro-Rojas C.M."/>
            <person name="Teiling C."/>
            <person name="Du L."/>
            <person name="Kapatral V."/>
            <person name="Walunas T.L."/>
            <person name="Crosson S."/>
        </authorList>
    </citation>
    <scope>NUCLEOTIDE SEQUENCE [LARGE SCALE GENOMIC DNA]</scope>
    <source>
        <strain>NA1000 / CB15N</strain>
    </source>
</reference>
<feature type="chain" id="PRO_1000196233" description="Large ribosomal subunit protein bL9">
    <location>
        <begin position="1"/>
        <end position="194"/>
    </location>
</feature>
<feature type="region of interest" description="Disordered" evidence="2">
    <location>
        <begin position="148"/>
        <end position="194"/>
    </location>
</feature>
<accession>B8GVN4</accession>
<gene>
    <name evidence="1" type="primary">rplI</name>
    <name type="ordered locus">CCNA_01739</name>
</gene>
<protein>
    <recommendedName>
        <fullName evidence="1">Large ribosomal subunit protein bL9</fullName>
    </recommendedName>
    <alternativeName>
        <fullName evidence="3">50S ribosomal protein L9</fullName>
    </alternativeName>
</protein>
<evidence type="ECO:0000255" key="1">
    <source>
        <dbReference type="HAMAP-Rule" id="MF_00503"/>
    </source>
</evidence>
<evidence type="ECO:0000256" key="2">
    <source>
        <dbReference type="SAM" id="MobiDB-lite"/>
    </source>
</evidence>
<evidence type="ECO:0000305" key="3"/>
<comment type="function">
    <text evidence="1">Binds to the 23S rRNA.</text>
</comment>
<comment type="similarity">
    <text evidence="1">Belongs to the bacterial ribosomal protein bL9 family.</text>
</comment>
<dbReference type="EMBL" id="CP001340">
    <property type="protein sequence ID" value="ACL95204.1"/>
    <property type="molecule type" value="Genomic_DNA"/>
</dbReference>
<dbReference type="RefSeq" id="WP_010919540.1">
    <property type="nucleotide sequence ID" value="NC_011916.1"/>
</dbReference>
<dbReference type="RefSeq" id="YP_002517112.1">
    <property type="nucleotide sequence ID" value="NC_011916.1"/>
</dbReference>
<dbReference type="SMR" id="B8GVN4"/>
<dbReference type="GeneID" id="7331204"/>
<dbReference type="KEGG" id="ccs:CCNA_01739"/>
<dbReference type="PATRIC" id="fig|565050.3.peg.1715"/>
<dbReference type="HOGENOM" id="CLU_078938_1_0_5"/>
<dbReference type="OrthoDB" id="9788336at2"/>
<dbReference type="PhylomeDB" id="B8GVN4"/>
<dbReference type="Proteomes" id="UP000001364">
    <property type="component" value="Chromosome"/>
</dbReference>
<dbReference type="GO" id="GO:1990904">
    <property type="term" value="C:ribonucleoprotein complex"/>
    <property type="evidence" value="ECO:0007669"/>
    <property type="project" value="UniProtKB-KW"/>
</dbReference>
<dbReference type="GO" id="GO:0005840">
    <property type="term" value="C:ribosome"/>
    <property type="evidence" value="ECO:0007669"/>
    <property type="project" value="UniProtKB-KW"/>
</dbReference>
<dbReference type="GO" id="GO:0019843">
    <property type="term" value="F:rRNA binding"/>
    <property type="evidence" value="ECO:0007669"/>
    <property type="project" value="UniProtKB-UniRule"/>
</dbReference>
<dbReference type="GO" id="GO:0003735">
    <property type="term" value="F:structural constituent of ribosome"/>
    <property type="evidence" value="ECO:0007669"/>
    <property type="project" value="InterPro"/>
</dbReference>
<dbReference type="GO" id="GO:0006412">
    <property type="term" value="P:translation"/>
    <property type="evidence" value="ECO:0007669"/>
    <property type="project" value="UniProtKB-UniRule"/>
</dbReference>
<dbReference type="Gene3D" id="3.10.430.100">
    <property type="entry name" value="Ribosomal protein L9, C-terminal domain"/>
    <property type="match status" value="1"/>
</dbReference>
<dbReference type="Gene3D" id="3.40.5.10">
    <property type="entry name" value="Ribosomal protein L9, N-terminal domain"/>
    <property type="match status" value="1"/>
</dbReference>
<dbReference type="HAMAP" id="MF_00503">
    <property type="entry name" value="Ribosomal_bL9"/>
    <property type="match status" value="1"/>
</dbReference>
<dbReference type="InterPro" id="IPR000244">
    <property type="entry name" value="Ribosomal_bL9"/>
</dbReference>
<dbReference type="InterPro" id="IPR009027">
    <property type="entry name" value="Ribosomal_bL9/RNase_H1_N"/>
</dbReference>
<dbReference type="InterPro" id="IPR020594">
    <property type="entry name" value="Ribosomal_bL9_bac/chp"/>
</dbReference>
<dbReference type="InterPro" id="IPR020069">
    <property type="entry name" value="Ribosomal_bL9_C"/>
</dbReference>
<dbReference type="InterPro" id="IPR036791">
    <property type="entry name" value="Ribosomal_bL9_C_sf"/>
</dbReference>
<dbReference type="InterPro" id="IPR020070">
    <property type="entry name" value="Ribosomal_bL9_N"/>
</dbReference>
<dbReference type="InterPro" id="IPR036935">
    <property type="entry name" value="Ribosomal_bL9_N_sf"/>
</dbReference>
<dbReference type="NCBIfam" id="TIGR00158">
    <property type="entry name" value="L9"/>
    <property type="match status" value="1"/>
</dbReference>
<dbReference type="PANTHER" id="PTHR21368">
    <property type="entry name" value="50S RIBOSOMAL PROTEIN L9"/>
    <property type="match status" value="1"/>
</dbReference>
<dbReference type="Pfam" id="PF03948">
    <property type="entry name" value="Ribosomal_L9_C"/>
    <property type="match status" value="1"/>
</dbReference>
<dbReference type="Pfam" id="PF01281">
    <property type="entry name" value="Ribosomal_L9_N"/>
    <property type="match status" value="1"/>
</dbReference>
<dbReference type="SUPFAM" id="SSF55658">
    <property type="entry name" value="L9 N-domain-like"/>
    <property type="match status" value="1"/>
</dbReference>
<dbReference type="SUPFAM" id="SSF55653">
    <property type="entry name" value="Ribosomal protein L9 C-domain"/>
    <property type="match status" value="1"/>
</dbReference>
<dbReference type="PROSITE" id="PS00651">
    <property type="entry name" value="RIBOSOMAL_L9"/>
    <property type="match status" value="1"/>
</dbReference>
<name>RL9_CAUVN</name>
<organism>
    <name type="scientific">Caulobacter vibrioides (strain NA1000 / CB15N)</name>
    <name type="common">Caulobacter crescentus</name>
    <dbReference type="NCBI Taxonomy" id="565050"/>
    <lineage>
        <taxon>Bacteria</taxon>
        <taxon>Pseudomonadati</taxon>
        <taxon>Pseudomonadota</taxon>
        <taxon>Alphaproteobacteria</taxon>
        <taxon>Caulobacterales</taxon>
        <taxon>Caulobacteraceae</taxon>
        <taxon>Caulobacter</taxon>
    </lineage>
</organism>
<keyword id="KW-1185">Reference proteome</keyword>
<keyword id="KW-0687">Ribonucleoprotein</keyword>
<keyword id="KW-0689">Ribosomal protein</keyword>
<keyword id="KW-0694">RNA-binding</keyword>
<keyword id="KW-0699">rRNA-binding</keyword>
<sequence>MKVILLERVEGTGVLGDEVTVKDGFARNYLLPRGKALRATKANLATFEAQRAEIEARNVKNRESAAKNGEALDGTQYILIRQAGESGQLYGSVAGRDVADAIKAEGGKVDRSMVVLDKPIKTLGVHEVKVKLHAEVTITVTLNIARSQDEAERQARGENVINSQFEEDRAAEAEAAQDMAEGGAGSFEGDHYEA</sequence>